<keyword id="KW-0067">ATP-binding</keyword>
<keyword id="KW-0963">Cytoplasm</keyword>
<keyword id="KW-0206">Cytoskeleton</keyword>
<keyword id="KW-0378">Hydrolase</keyword>
<keyword id="KW-0547">Nucleotide-binding</keyword>
<protein>
    <recommendedName>
        <fullName>Actin-2</fullName>
        <ecNumber evidence="1">3.6.4.-</ecNumber>
    </recommendedName>
</protein>
<comment type="function">
    <text>Actins are highly conserved proteins that are involved in various types of cell motility and are ubiquitously expressed in all eukaryotic cells.</text>
</comment>
<comment type="catalytic activity">
    <reaction evidence="1">
        <text>ATP + H2O = ADP + phosphate + H(+)</text>
        <dbReference type="Rhea" id="RHEA:13065"/>
        <dbReference type="ChEBI" id="CHEBI:15377"/>
        <dbReference type="ChEBI" id="CHEBI:15378"/>
        <dbReference type="ChEBI" id="CHEBI:30616"/>
        <dbReference type="ChEBI" id="CHEBI:43474"/>
        <dbReference type="ChEBI" id="CHEBI:456216"/>
    </reaction>
</comment>
<comment type="subcellular location">
    <subcellularLocation>
        <location>Cytoplasm</location>
        <location>Cytoskeleton</location>
    </subcellularLocation>
</comment>
<comment type="similarity">
    <text evidence="2">Belongs to the actin family.</text>
</comment>
<organism>
    <name type="scientific">Pisum sativum</name>
    <name type="common">Garden pea</name>
    <name type="synonym">Lathyrus oleraceus</name>
    <dbReference type="NCBI Taxonomy" id="3888"/>
    <lineage>
        <taxon>Eukaryota</taxon>
        <taxon>Viridiplantae</taxon>
        <taxon>Streptophyta</taxon>
        <taxon>Embryophyta</taxon>
        <taxon>Tracheophyta</taxon>
        <taxon>Spermatophyta</taxon>
        <taxon>Magnoliopsida</taxon>
        <taxon>eudicotyledons</taxon>
        <taxon>Gunneridae</taxon>
        <taxon>Pentapetalae</taxon>
        <taxon>rosids</taxon>
        <taxon>fabids</taxon>
        <taxon>Fabales</taxon>
        <taxon>Fabaceae</taxon>
        <taxon>Papilionoideae</taxon>
        <taxon>50 kb inversion clade</taxon>
        <taxon>NPAAA clade</taxon>
        <taxon>Hologalegina</taxon>
        <taxon>IRL clade</taxon>
        <taxon>Fabeae</taxon>
        <taxon>Pisum</taxon>
    </lineage>
</organism>
<reference key="1">
    <citation type="submission" date="1992-10" db="EMBL/GenBank/DDBJ databases">
        <authorList>
            <person name="Cao X.F."/>
            <person name="Wang R.C."/>
            <person name="Chen Z.L."/>
            <person name="Yen L.F."/>
        </authorList>
    </citation>
    <scope>NUCLEOTIDE SEQUENCE [MRNA]</scope>
    <source>
        <tissue>Tendril</tissue>
    </source>
</reference>
<evidence type="ECO:0000250" key="1">
    <source>
        <dbReference type="UniProtKB" id="P68137"/>
    </source>
</evidence>
<evidence type="ECO:0000305" key="2"/>
<dbReference type="EC" id="3.6.4.-" evidence="1"/>
<dbReference type="EMBL" id="X68649">
    <property type="protein sequence ID" value="CAA48609.1"/>
    <property type="molecule type" value="mRNA"/>
</dbReference>
<dbReference type="PIR" id="S26435">
    <property type="entry name" value="S26435"/>
</dbReference>
<dbReference type="SMR" id="P30165"/>
<dbReference type="GO" id="GO:0005737">
    <property type="term" value="C:cytoplasm"/>
    <property type="evidence" value="ECO:0007669"/>
    <property type="project" value="UniProtKB-KW"/>
</dbReference>
<dbReference type="GO" id="GO:0005856">
    <property type="term" value="C:cytoskeleton"/>
    <property type="evidence" value="ECO:0007669"/>
    <property type="project" value="UniProtKB-SubCell"/>
</dbReference>
<dbReference type="GO" id="GO:0005524">
    <property type="term" value="F:ATP binding"/>
    <property type="evidence" value="ECO:0007669"/>
    <property type="project" value="UniProtKB-KW"/>
</dbReference>
<dbReference type="GO" id="GO:0016787">
    <property type="term" value="F:hydrolase activity"/>
    <property type="evidence" value="ECO:0007669"/>
    <property type="project" value="UniProtKB-KW"/>
</dbReference>
<dbReference type="CDD" id="cd10224">
    <property type="entry name" value="ASKHA_NBD_actin"/>
    <property type="match status" value="1"/>
</dbReference>
<dbReference type="FunFam" id="3.30.420.40:FF:000291">
    <property type="entry name" value="Actin, alpha skeletal muscle"/>
    <property type="match status" value="1"/>
</dbReference>
<dbReference type="FunFam" id="3.90.640.10:FF:000001">
    <property type="entry name" value="Actin, muscle"/>
    <property type="match status" value="1"/>
</dbReference>
<dbReference type="FunFam" id="3.30.420.40:FF:000404">
    <property type="entry name" value="Major actin"/>
    <property type="match status" value="1"/>
</dbReference>
<dbReference type="FunFam" id="3.30.420.40:FF:000058">
    <property type="entry name" value="Putative actin-related protein 5"/>
    <property type="match status" value="1"/>
</dbReference>
<dbReference type="Gene3D" id="3.30.420.40">
    <property type="match status" value="2"/>
</dbReference>
<dbReference type="Gene3D" id="3.90.640.10">
    <property type="entry name" value="Actin, Chain A, domain 4"/>
    <property type="match status" value="1"/>
</dbReference>
<dbReference type="InterPro" id="IPR004000">
    <property type="entry name" value="Actin"/>
</dbReference>
<dbReference type="InterPro" id="IPR020902">
    <property type="entry name" value="Actin/actin-like_CS"/>
</dbReference>
<dbReference type="InterPro" id="IPR004001">
    <property type="entry name" value="Actin_CS"/>
</dbReference>
<dbReference type="InterPro" id="IPR043129">
    <property type="entry name" value="ATPase_NBD"/>
</dbReference>
<dbReference type="PANTHER" id="PTHR11937">
    <property type="entry name" value="ACTIN"/>
    <property type="match status" value="1"/>
</dbReference>
<dbReference type="Pfam" id="PF00022">
    <property type="entry name" value="Actin"/>
    <property type="match status" value="1"/>
</dbReference>
<dbReference type="PRINTS" id="PR00190">
    <property type="entry name" value="ACTIN"/>
</dbReference>
<dbReference type="SMART" id="SM00268">
    <property type="entry name" value="ACTIN"/>
    <property type="match status" value="1"/>
</dbReference>
<dbReference type="SUPFAM" id="SSF53067">
    <property type="entry name" value="Actin-like ATPase domain"/>
    <property type="match status" value="2"/>
</dbReference>
<dbReference type="PROSITE" id="PS00406">
    <property type="entry name" value="ACTINS_1"/>
    <property type="match status" value="1"/>
</dbReference>
<dbReference type="PROSITE" id="PS00432">
    <property type="entry name" value="ACTINS_2"/>
    <property type="match status" value="1"/>
</dbReference>
<dbReference type="PROSITE" id="PS01132">
    <property type="entry name" value="ACTINS_ACT_LIKE"/>
    <property type="match status" value="1"/>
</dbReference>
<accession>P30165</accession>
<name>ACT2_PEA</name>
<feature type="chain" id="PRO_0000088981" description="Actin-2">
    <location>
        <begin position="1"/>
        <end position="376"/>
    </location>
</feature>
<sequence length="376" mass="41768">MADAEDIQPLVCDNGTGMVKAGFAGDDARAVFPSIVGRPRHTGVMVGMGQKDAYVGDEAQSKRGILTLKYPIEHGIVSNWDDMEKIWHHTFYNELRVAPEEHPVLLTEAPLNPKANREKMTQIMFETFNVPAMYVAIQAVLSLYASGRTTGIVLESGDGVSHTVPIYEGYALPHAILRLDLAGRDLTESLMKILTERGYMFTTSAEREIVRDIKEKLAYVALDYEQELETAKSSSSIEKNYELPDGQVITIGAERFRCPEVLFQPSMIGMEAAGIHETTYNSIMKCDVDIRKDLYGNIVLSGGTTMFPGIADRMSKEITALAPSSMKIKVVAPPERRYSVWIGGSILASLSTFQQMWISKAEYDERGPSIVHRKCF</sequence>
<proteinExistence type="evidence at transcript level"/>